<name>DXR_BIFLO</name>
<organism>
    <name type="scientific">Bifidobacterium longum (strain NCC 2705)</name>
    <dbReference type="NCBI Taxonomy" id="206672"/>
    <lineage>
        <taxon>Bacteria</taxon>
        <taxon>Bacillati</taxon>
        <taxon>Actinomycetota</taxon>
        <taxon>Actinomycetes</taxon>
        <taxon>Bifidobacteriales</taxon>
        <taxon>Bifidobacteriaceae</taxon>
        <taxon>Bifidobacterium</taxon>
    </lineage>
</organism>
<accession>Q8G7Y7</accession>
<evidence type="ECO:0000255" key="1">
    <source>
        <dbReference type="HAMAP-Rule" id="MF_00183"/>
    </source>
</evidence>
<protein>
    <recommendedName>
        <fullName evidence="1">1-deoxy-D-xylulose 5-phosphate reductoisomerase</fullName>
        <shortName evidence="1">DXP reductoisomerase</shortName>
        <ecNumber evidence="1">1.1.1.267</ecNumber>
    </recommendedName>
    <alternativeName>
        <fullName evidence="1">1-deoxyxylulose-5-phosphate reductoisomerase</fullName>
    </alternativeName>
    <alternativeName>
        <fullName evidence="1">2-C-methyl-D-erythritol 4-phosphate synthase</fullName>
    </alternativeName>
</protein>
<proteinExistence type="inferred from homology"/>
<gene>
    <name evidence="1" type="primary">dxr</name>
    <name type="ordered locus">BL0097</name>
</gene>
<comment type="function">
    <text evidence="1">Catalyzes the NADPH-dependent rearrangement and reduction of 1-deoxy-D-xylulose-5-phosphate (DXP) to 2-C-methyl-D-erythritol 4-phosphate (MEP).</text>
</comment>
<comment type="catalytic activity">
    <reaction evidence="1">
        <text>2-C-methyl-D-erythritol 4-phosphate + NADP(+) = 1-deoxy-D-xylulose 5-phosphate + NADPH + H(+)</text>
        <dbReference type="Rhea" id="RHEA:13717"/>
        <dbReference type="ChEBI" id="CHEBI:15378"/>
        <dbReference type="ChEBI" id="CHEBI:57783"/>
        <dbReference type="ChEBI" id="CHEBI:57792"/>
        <dbReference type="ChEBI" id="CHEBI:58262"/>
        <dbReference type="ChEBI" id="CHEBI:58349"/>
        <dbReference type="EC" id="1.1.1.267"/>
    </reaction>
    <physiologicalReaction direction="right-to-left" evidence="1">
        <dbReference type="Rhea" id="RHEA:13719"/>
    </physiologicalReaction>
</comment>
<comment type="cofactor">
    <cofactor evidence="1">
        <name>Mg(2+)</name>
        <dbReference type="ChEBI" id="CHEBI:18420"/>
    </cofactor>
    <cofactor evidence="1">
        <name>Mn(2+)</name>
        <dbReference type="ChEBI" id="CHEBI:29035"/>
    </cofactor>
</comment>
<comment type="pathway">
    <text evidence="1">Isoprenoid biosynthesis; isopentenyl diphosphate biosynthesis via DXP pathway; isopentenyl diphosphate from 1-deoxy-D-xylulose 5-phosphate: step 1/6.</text>
</comment>
<comment type="similarity">
    <text evidence="1">Belongs to the DXR family.</text>
</comment>
<feature type="chain" id="PRO_0000163616" description="1-deoxy-D-xylulose 5-phosphate reductoisomerase">
    <location>
        <begin position="1"/>
        <end position="396"/>
    </location>
</feature>
<feature type="binding site" evidence="1">
    <location>
        <position position="15"/>
    </location>
    <ligand>
        <name>NADPH</name>
        <dbReference type="ChEBI" id="CHEBI:57783"/>
    </ligand>
</feature>
<feature type="binding site" evidence="1">
    <location>
        <position position="16"/>
    </location>
    <ligand>
        <name>NADPH</name>
        <dbReference type="ChEBI" id="CHEBI:57783"/>
    </ligand>
</feature>
<feature type="binding site" evidence="1">
    <location>
        <position position="17"/>
    </location>
    <ligand>
        <name>NADPH</name>
        <dbReference type="ChEBI" id="CHEBI:57783"/>
    </ligand>
</feature>
<feature type="binding site" evidence="1">
    <location>
        <position position="18"/>
    </location>
    <ligand>
        <name>NADPH</name>
        <dbReference type="ChEBI" id="CHEBI:57783"/>
    </ligand>
</feature>
<feature type="binding site" evidence="1">
    <location>
        <position position="41"/>
    </location>
    <ligand>
        <name>NADPH</name>
        <dbReference type="ChEBI" id="CHEBI:57783"/>
    </ligand>
</feature>
<feature type="binding site" evidence="1">
    <location>
        <position position="130"/>
    </location>
    <ligand>
        <name>NADPH</name>
        <dbReference type="ChEBI" id="CHEBI:57783"/>
    </ligand>
</feature>
<feature type="binding site" evidence="1">
    <location>
        <position position="131"/>
    </location>
    <ligand>
        <name>1-deoxy-D-xylulose 5-phosphate</name>
        <dbReference type="ChEBI" id="CHEBI:57792"/>
    </ligand>
</feature>
<feature type="binding site" evidence="1">
    <location>
        <position position="132"/>
    </location>
    <ligand>
        <name>NADPH</name>
        <dbReference type="ChEBI" id="CHEBI:57783"/>
    </ligand>
</feature>
<feature type="binding site" evidence="1">
    <location>
        <position position="155"/>
    </location>
    <ligand>
        <name>Mn(2+)</name>
        <dbReference type="ChEBI" id="CHEBI:29035"/>
    </ligand>
</feature>
<feature type="binding site" evidence="1">
    <location>
        <position position="156"/>
    </location>
    <ligand>
        <name>1-deoxy-D-xylulose 5-phosphate</name>
        <dbReference type="ChEBI" id="CHEBI:57792"/>
    </ligand>
</feature>
<feature type="binding site" evidence="1">
    <location>
        <position position="157"/>
    </location>
    <ligand>
        <name>1-deoxy-D-xylulose 5-phosphate</name>
        <dbReference type="ChEBI" id="CHEBI:57792"/>
    </ligand>
</feature>
<feature type="binding site" evidence="1">
    <location>
        <position position="157"/>
    </location>
    <ligand>
        <name>Mn(2+)</name>
        <dbReference type="ChEBI" id="CHEBI:29035"/>
    </ligand>
</feature>
<feature type="binding site" evidence="1">
    <location>
        <position position="181"/>
    </location>
    <ligand>
        <name>1-deoxy-D-xylulose 5-phosphate</name>
        <dbReference type="ChEBI" id="CHEBI:57792"/>
    </ligand>
</feature>
<feature type="binding site" evidence="1">
    <location>
        <position position="204"/>
    </location>
    <ligand>
        <name>1-deoxy-D-xylulose 5-phosphate</name>
        <dbReference type="ChEBI" id="CHEBI:57792"/>
    </ligand>
</feature>
<feature type="binding site" evidence="1">
    <location>
        <position position="210"/>
    </location>
    <ligand>
        <name>NADPH</name>
        <dbReference type="ChEBI" id="CHEBI:57783"/>
    </ligand>
</feature>
<feature type="binding site" evidence="1">
    <location>
        <position position="217"/>
    </location>
    <ligand>
        <name>1-deoxy-D-xylulose 5-phosphate</name>
        <dbReference type="ChEBI" id="CHEBI:57792"/>
    </ligand>
</feature>
<feature type="binding site" evidence="1">
    <location>
        <position position="222"/>
    </location>
    <ligand>
        <name>1-deoxy-D-xylulose 5-phosphate</name>
        <dbReference type="ChEBI" id="CHEBI:57792"/>
    </ligand>
</feature>
<feature type="binding site" evidence="1">
    <location>
        <position position="223"/>
    </location>
    <ligand>
        <name>1-deoxy-D-xylulose 5-phosphate</name>
        <dbReference type="ChEBI" id="CHEBI:57792"/>
    </ligand>
</feature>
<feature type="binding site" evidence="1">
    <location>
        <position position="226"/>
    </location>
    <ligand>
        <name>1-deoxy-D-xylulose 5-phosphate</name>
        <dbReference type="ChEBI" id="CHEBI:57792"/>
    </ligand>
</feature>
<feature type="binding site" evidence="1">
    <location>
        <position position="226"/>
    </location>
    <ligand>
        <name>Mn(2+)</name>
        <dbReference type="ChEBI" id="CHEBI:29035"/>
    </ligand>
</feature>
<keyword id="KW-0414">Isoprene biosynthesis</keyword>
<keyword id="KW-0464">Manganese</keyword>
<keyword id="KW-0479">Metal-binding</keyword>
<keyword id="KW-0521">NADP</keyword>
<keyword id="KW-0560">Oxidoreductase</keyword>
<keyword id="KW-1185">Reference proteome</keyword>
<dbReference type="EC" id="1.1.1.267" evidence="1"/>
<dbReference type="EMBL" id="AE014295">
    <property type="protein sequence ID" value="AAN23962.1"/>
    <property type="molecule type" value="Genomic_DNA"/>
</dbReference>
<dbReference type="RefSeq" id="NP_695326.1">
    <property type="nucleotide sequence ID" value="NC_004307.2"/>
</dbReference>
<dbReference type="RefSeq" id="WP_007053294.1">
    <property type="nucleotide sequence ID" value="NC_004307.2"/>
</dbReference>
<dbReference type="SMR" id="Q8G7Y7"/>
<dbReference type="STRING" id="206672.BL0097"/>
<dbReference type="EnsemblBacteria" id="AAN23962">
    <property type="protein sequence ID" value="AAN23962"/>
    <property type="gene ID" value="BL0097"/>
</dbReference>
<dbReference type="GeneID" id="69578569"/>
<dbReference type="KEGG" id="blo:BL0097"/>
<dbReference type="PATRIC" id="fig|206672.9.peg.104"/>
<dbReference type="HOGENOM" id="CLU_035714_4_0_11"/>
<dbReference type="OrthoDB" id="9806546at2"/>
<dbReference type="PhylomeDB" id="Q8G7Y7"/>
<dbReference type="UniPathway" id="UPA00056">
    <property type="reaction ID" value="UER00092"/>
</dbReference>
<dbReference type="Proteomes" id="UP000000439">
    <property type="component" value="Chromosome"/>
</dbReference>
<dbReference type="GO" id="GO:0030604">
    <property type="term" value="F:1-deoxy-D-xylulose-5-phosphate reductoisomerase activity"/>
    <property type="evidence" value="ECO:0007669"/>
    <property type="project" value="UniProtKB-UniRule"/>
</dbReference>
<dbReference type="GO" id="GO:0030145">
    <property type="term" value="F:manganese ion binding"/>
    <property type="evidence" value="ECO:0007669"/>
    <property type="project" value="TreeGrafter"/>
</dbReference>
<dbReference type="GO" id="GO:0070402">
    <property type="term" value="F:NADPH binding"/>
    <property type="evidence" value="ECO:0007669"/>
    <property type="project" value="InterPro"/>
</dbReference>
<dbReference type="GO" id="GO:0051484">
    <property type="term" value="P:isopentenyl diphosphate biosynthetic process, methylerythritol 4-phosphate pathway involved in terpenoid biosynthetic process"/>
    <property type="evidence" value="ECO:0007669"/>
    <property type="project" value="TreeGrafter"/>
</dbReference>
<dbReference type="FunFam" id="3.40.50.720:FF:000045">
    <property type="entry name" value="1-deoxy-D-xylulose 5-phosphate reductoisomerase"/>
    <property type="match status" value="1"/>
</dbReference>
<dbReference type="Gene3D" id="1.10.1740.10">
    <property type="match status" value="1"/>
</dbReference>
<dbReference type="Gene3D" id="3.40.50.720">
    <property type="entry name" value="NAD(P)-binding Rossmann-like Domain"/>
    <property type="match status" value="1"/>
</dbReference>
<dbReference type="HAMAP" id="MF_00183">
    <property type="entry name" value="DXP_reductoisom"/>
    <property type="match status" value="1"/>
</dbReference>
<dbReference type="InterPro" id="IPR003821">
    <property type="entry name" value="DXP_reductoisomerase"/>
</dbReference>
<dbReference type="InterPro" id="IPR013644">
    <property type="entry name" value="DXP_reductoisomerase_C"/>
</dbReference>
<dbReference type="InterPro" id="IPR013512">
    <property type="entry name" value="DXP_reductoisomerase_N"/>
</dbReference>
<dbReference type="InterPro" id="IPR026877">
    <property type="entry name" value="DXPR_C"/>
</dbReference>
<dbReference type="InterPro" id="IPR036169">
    <property type="entry name" value="DXPR_C_sf"/>
</dbReference>
<dbReference type="InterPro" id="IPR036291">
    <property type="entry name" value="NAD(P)-bd_dom_sf"/>
</dbReference>
<dbReference type="NCBIfam" id="TIGR00243">
    <property type="entry name" value="Dxr"/>
    <property type="match status" value="1"/>
</dbReference>
<dbReference type="PANTHER" id="PTHR30525">
    <property type="entry name" value="1-DEOXY-D-XYLULOSE 5-PHOSPHATE REDUCTOISOMERASE"/>
    <property type="match status" value="1"/>
</dbReference>
<dbReference type="PANTHER" id="PTHR30525:SF0">
    <property type="entry name" value="1-DEOXY-D-XYLULOSE 5-PHOSPHATE REDUCTOISOMERASE, CHLOROPLASTIC"/>
    <property type="match status" value="1"/>
</dbReference>
<dbReference type="Pfam" id="PF08436">
    <property type="entry name" value="DXP_redisom_C"/>
    <property type="match status" value="1"/>
</dbReference>
<dbReference type="Pfam" id="PF02670">
    <property type="entry name" value="DXP_reductoisom"/>
    <property type="match status" value="1"/>
</dbReference>
<dbReference type="Pfam" id="PF13288">
    <property type="entry name" value="DXPR_C"/>
    <property type="match status" value="1"/>
</dbReference>
<dbReference type="PIRSF" id="PIRSF006205">
    <property type="entry name" value="Dxp_reductismrs"/>
    <property type="match status" value="1"/>
</dbReference>
<dbReference type="SUPFAM" id="SSF69055">
    <property type="entry name" value="1-deoxy-D-xylulose-5-phosphate reductoisomerase, C-terminal domain"/>
    <property type="match status" value="1"/>
</dbReference>
<dbReference type="SUPFAM" id="SSF55347">
    <property type="entry name" value="Glyceraldehyde-3-phosphate dehydrogenase-like, C-terminal domain"/>
    <property type="match status" value="1"/>
</dbReference>
<dbReference type="SUPFAM" id="SSF51735">
    <property type="entry name" value="NAD(P)-binding Rossmann-fold domains"/>
    <property type="match status" value="1"/>
</dbReference>
<sequence length="396" mass="42014">MSIASNSTVIILGSTGSIGTQGLDVISRHPERFTVTGLAAGGAHIELLAQQAAQFHVSEVAVFDETKVPALQAALAQAGAQGVRVTGGPDSVIAMAGSGANVVLNGITGSIGLEPSIAALKAGSQLALANKESVVAGGHLLFSAQVRENQINPVDSEHSAIWQSLRSGTHAEVAKLVVTASGGPFRGWKRADMENITPEQALHHPTWNMGPVVTINSSTLMNKGLEVIEASRLFNVPPERIDVTVHPQSIVHSMVEFVDGATICQASPPDMRLPIALGLSAPDRMTNVAAACDWTQAATWTFEPLDDEAFPAVQLARHCLAASEKHTAVLNAANEQAVHAFLEHRLPYLGIVDTVKAVLDQMDAELRGNPLFTDVEEMNQLELEARRRADDLINKQ</sequence>
<reference key="1">
    <citation type="journal article" date="2002" name="Proc. Natl. Acad. Sci. U.S.A.">
        <title>The genome sequence of Bifidobacterium longum reflects its adaptation to the human gastrointestinal tract.</title>
        <authorList>
            <person name="Schell M.A."/>
            <person name="Karmirantzou M."/>
            <person name="Snel B."/>
            <person name="Vilanova D."/>
            <person name="Berger B."/>
            <person name="Pessi G."/>
            <person name="Zwahlen M.-C."/>
            <person name="Desiere F."/>
            <person name="Bork P."/>
            <person name="Delley M."/>
            <person name="Pridmore R.D."/>
            <person name="Arigoni F."/>
        </authorList>
    </citation>
    <scope>NUCLEOTIDE SEQUENCE [LARGE SCALE GENOMIC DNA]</scope>
    <source>
        <strain>NCC 2705</strain>
    </source>
</reference>